<proteinExistence type="evidence at protein level"/>
<protein>
    <recommendedName>
        <fullName>Coenzyme Q-binding protein COQ10, mitochondrial</fullName>
    </recommendedName>
</protein>
<accession>Q08058</accession>
<accession>D6W259</accession>
<evidence type="ECO:0000255" key="1"/>
<evidence type="ECO:0000269" key="2">
    <source>
    </source>
</evidence>
<evidence type="ECO:0000269" key="3">
    <source>
    </source>
</evidence>
<evidence type="ECO:0000305" key="4"/>
<organism>
    <name type="scientific">Saccharomyces cerevisiae (strain ATCC 204508 / S288c)</name>
    <name type="common">Baker's yeast</name>
    <dbReference type="NCBI Taxonomy" id="559292"/>
    <lineage>
        <taxon>Eukaryota</taxon>
        <taxon>Fungi</taxon>
        <taxon>Dikarya</taxon>
        <taxon>Ascomycota</taxon>
        <taxon>Saccharomycotina</taxon>
        <taxon>Saccharomycetes</taxon>
        <taxon>Saccharomycetales</taxon>
        <taxon>Saccharomycetaceae</taxon>
        <taxon>Saccharomyces</taxon>
    </lineage>
</organism>
<keyword id="KW-0472">Membrane</keyword>
<keyword id="KW-0496">Mitochondrion</keyword>
<keyword id="KW-0999">Mitochondrion inner membrane</keyword>
<keyword id="KW-1185">Reference proteome</keyword>
<keyword id="KW-0809">Transit peptide</keyword>
<dbReference type="EMBL" id="Z74750">
    <property type="protein sequence ID" value="CAA99007.1"/>
    <property type="molecule type" value="Genomic_DNA"/>
</dbReference>
<dbReference type="EMBL" id="AY558008">
    <property type="protein sequence ID" value="AAS56334.1"/>
    <property type="molecule type" value="Genomic_DNA"/>
</dbReference>
<dbReference type="EMBL" id="BK006948">
    <property type="protein sequence ID" value="DAA10775.1"/>
    <property type="molecule type" value="Genomic_DNA"/>
</dbReference>
<dbReference type="PIR" id="S66690">
    <property type="entry name" value="S66690"/>
</dbReference>
<dbReference type="RefSeq" id="NP_014635.1">
    <property type="nucleotide sequence ID" value="NM_001183262.1"/>
</dbReference>
<dbReference type="SMR" id="Q08058"/>
<dbReference type="BioGRID" id="34396">
    <property type="interactions" value="230"/>
</dbReference>
<dbReference type="DIP" id="DIP-4689N"/>
<dbReference type="FunCoup" id="Q08058">
    <property type="interactions" value="177"/>
</dbReference>
<dbReference type="IntAct" id="Q08058">
    <property type="interactions" value="3"/>
</dbReference>
<dbReference type="MINT" id="Q08058"/>
<dbReference type="STRING" id="4932.YOL008W"/>
<dbReference type="PaxDb" id="4932-YOL008W"/>
<dbReference type="PeptideAtlas" id="Q08058"/>
<dbReference type="DNASU" id="854154"/>
<dbReference type="EnsemblFungi" id="YOL008W_mRNA">
    <property type="protein sequence ID" value="YOL008W"/>
    <property type="gene ID" value="YOL008W"/>
</dbReference>
<dbReference type="GeneID" id="854154"/>
<dbReference type="KEGG" id="sce:YOL008W"/>
<dbReference type="AGR" id="SGD:S000005368"/>
<dbReference type="SGD" id="S000005368">
    <property type="gene designation" value="COQ10"/>
</dbReference>
<dbReference type="VEuPathDB" id="FungiDB:YOL008W"/>
<dbReference type="eggNOG" id="KOG3177">
    <property type="taxonomic scope" value="Eukaryota"/>
</dbReference>
<dbReference type="GeneTree" id="ENSGT00940000173806"/>
<dbReference type="HOGENOM" id="CLU_079653_1_2_1"/>
<dbReference type="InParanoid" id="Q08058"/>
<dbReference type="OMA" id="IDGPFKY"/>
<dbReference type="OrthoDB" id="292693at2759"/>
<dbReference type="BioCyc" id="YEAST:G3O-33425-MONOMER"/>
<dbReference type="BioGRID-ORCS" id="854154">
    <property type="hits" value="10 hits in 10 CRISPR screens"/>
</dbReference>
<dbReference type="PRO" id="PR:Q08058"/>
<dbReference type="Proteomes" id="UP000002311">
    <property type="component" value="Chromosome XV"/>
</dbReference>
<dbReference type="RNAct" id="Q08058">
    <property type="molecule type" value="protein"/>
</dbReference>
<dbReference type="GO" id="GO:0005743">
    <property type="term" value="C:mitochondrial inner membrane"/>
    <property type="evidence" value="ECO:0000314"/>
    <property type="project" value="SGD"/>
</dbReference>
<dbReference type="GO" id="GO:0005739">
    <property type="term" value="C:mitochondrion"/>
    <property type="evidence" value="ECO:0007005"/>
    <property type="project" value="SGD"/>
</dbReference>
<dbReference type="GO" id="GO:0140104">
    <property type="term" value="F:molecular carrier activity"/>
    <property type="evidence" value="ECO:0000314"/>
    <property type="project" value="SGD"/>
</dbReference>
<dbReference type="GO" id="GO:0048039">
    <property type="term" value="F:ubiquinone binding"/>
    <property type="evidence" value="ECO:0000314"/>
    <property type="project" value="SGD"/>
</dbReference>
<dbReference type="GO" id="GO:0045333">
    <property type="term" value="P:cellular respiration"/>
    <property type="evidence" value="ECO:0007669"/>
    <property type="project" value="InterPro"/>
</dbReference>
<dbReference type="GO" id="GO:0006744">
    <property type="term" value="P:ubiquinone biosynthetic process"/>
    <property type="evidence" value="ECO:0000315"/>
    <property type="project" value="SGD"/>
</dbReference>
<dbReference type="CDD" id="cd07813">
    <property type="entry name" value="COQ10p_like"/>
    <property type="match status" value="1"/>
</dbReference>
<dbReference type="FunFam" id="3.30.530.20:FF:000052">
    <property type="entry name" value="Coenzyme Q"/>
    <property type="match status" value="1"/>
</dbReference>
<dbReference type="Gene3D" id="3.30.530.20">
    <property type="match status" value="1"/>
</dbReference>
<dbReference type="InterPro" id="IPR044996">
    <property type="entry name" value="COQ10-like"/>
</dbReference>
<dbReference type="InterPro" id="IPR005031">
    <property type="entry name" value="COQ10_START"/>
</dbReference>
<dbReference type="InterPro" id="IPR023393">
    <property type="entry name" value="START-like_dom_sf"/>
</dbReference>
<dbReference type="PANTHER" id="PTHR12901:SF10">
    <property type="entry name" value="COENZYME Q-BINDING PROTEIN COQ10, MITOCHONDRIAL"/>
    <property type="match status" value="1"/>
</dbReference>
<dbReference type="PANTHER" id="PTHR12901">
    <property type="entry name" value="SPERM PROTEIN HOMOLOG"/>
    <property type="match status" value="1"/>
</dbReference>
<dbReference type="Pfam" id="PF03364">
    <property type="entry name" value="Polyketide_cyc"/>
    <property type="match status" value="1"/>
</dbReference>
<dbReference type="SUPFAM" id="SSF55961">
    <property type="entry name" value="Bet v1-like"/>
    <property type="match status" value="1"/>
</dbReference>
<comment type="function">
    <text evidence="2">Required for the function of coenzyme Q in the respiratory chain. May serve as a chaperone or may be involved in the transport of Q6 from its site of synthesis to the catalytic sites of the respiratory complexes.</text>
</comment>
<comment type="subunit">
    <text evidence="2">Interacts with coenzyme Q.</text>
</comment>
<comment type="subcellular location">
    <subcellularLocation>
        <location evidence="2 3">Mitochondrion inner membrane</location>
        <topology evidence="2 3">Peripheral membrane protein</topology>
        <orientation evidence="2 3">Matrix side</orientation>
    </subcellularLocation>
</comment>
<comment type="similarity">
    <text evidence="4">Belongs to the COQ10 family.</text>
</comment>
<reference key="1">
    <citation type="journal article" date="1997" name="Nature">
        <title>The nucleotide sequence of Saccharomyces cerevisiae chromosome XV.</title>
        <authorList>
            <person name="Dujon B."/>
            <person name="Albermann K."/>
            <person name="Aldea M."/>
            <person name="Alexandraki D."/>
            <person name="Ansorge W."/>
            <person name="Arino J."/>
            <person name="Benes V."/>
            <person name="Bohn C."/>
            <person name="Bolotin-Fukuhara M."/>
            <person name="Bordonne R."/>
            <person name="Boyer J."/>
            <person name="Camasses A."/>
            <person name="Casamayor A."/>
            <person name="Casas C."/>
            <person name="Cheret G."/>
            <person name="Cziepluch C."/>
            <person name="Daignan-Fornier B."/>
            <person name="Dang V.-D."/>
            <person name="de Haan M."/>
            <person name="Delius H."/>
            <person name="Durand P."/>
            <person name="Fairhead C."/>
            <person name="Feldmann H."/>
            <person name="Gaillon L."/>
            <person name="Galisson F."/>
            <person name="Gamo F.-J."/>
            <person name="Gancedo C."/>
            <person name="Goffeau A."/>
            <person name="Goulding S.E."/>
            <person name="Grivell L.A."/>
            <person name="Habbig B."/>
            <person name="Hand N.J."/>
            <person name="Hani J."/>
            <person name="Hattenhorst U."/>
            <person name="Hebling U."/>
            <person name="Hernando Y."/>
            <person name="Herrero E."/>
            <person name="Heumann K."/>
            <person name="Hiesel R."/>
            <person name="Hilger F."/>
            <person name="Hofmann B."/>
            <person name="Hollenberg C.P."/>
            <person name="Hughes B."/>
            <person name="Jauniaux J.-C."/>
            <person name="Kalogeropoulos A."/>
            <person name="Katsoulou C."/>
            <person name="Kordes E."/>
            <person name="Lafuente M.J."/>
            <person name="Landt O."/>
            <person name="Louis E.J."/>
            <person name="Maarse A.C."/>
            <person name="Madania A."/>
            <person name="Mannhaupt G."/>
            <person name="Marck C."/>
            <person name="Martin R.P."/>
            <person name="Mewes H.-W."/>
            <person name="Michaux G."/>
            <person name="Paces V."/>
            <person name="Parle-McDermott A.G."/>
            <person name="Pearson B.M."/>
            <person name="Perrin A."/>
            <person name="Pettersson B."/>
            <person name="Poch O."/>
            <person name="Pohl T.M."/>
            <person name="Poirey R."/>
            <person name="Portetelle D."/>
            <person name="Pujol A."/>
            <person name="Purnelle B."/>
            <person name="Ramezani Rad M."/>
            <person name="Rechmann S."/>
            <person name="Schwager C."/>
            <person name="Schweizer M."/>
            <person name="Sor F."/>
            <person name="Sterky F."/>
            <person name="Tarassov I.A."/>
            <person name="Teodoru C."/>
            <person name="Tettelin H."/>
            <person name="Thierry A."/>
            <person name="Tobiasch E."/>
            <person name="Tzermia M."/>
            <person name="Uhlen M."/>
            <person name="Unseld M."/>
            <person name="Valens M."/>
            <person name="Vandenbol M."/>
            <person name="Vetter I."/>
            <person name="Vlcek C."/>
            <person name="Voet M."/>
            <person name="Volckaert G."/>
            <person name="Voss H."/>
            <person name="Wambutt R."/>
            <person name="Wedler H."/>
            <person name="Wiemann S."/>
            <person name="Winsor B."/>
            <person name="Wolfe K.H."/>
            <person name="Zollner A."/>
            <person name="Zumstein E."/>
            <person name="Kleine K."/>
        </authorList>
    </citation>
    <scope>NUCLEOTIDE SEQUENCE [LARGE SCALE GENOMIC DNA]</scope>
    <source>
        <strain>ATCC 204508 / S288c</strain>
    </source>
</reference>
<reference key="2">
    <citation type="journal article" date="2014" name="G3 (Bethesda)">
        <title>The reference genome sequence of Saccharomyces cerevisiae: Then and now.</title>
        <authorList>
            <person name="Engel S.R."/>
            <person name="Dietrich F.S."/>
            <person name="Fisk D.G."/>
            <person name="Binkley G."/>
            <person name="Balakrishnan R."/>
            <person name="Costanzo M.C."/>
            <person name="Dwight S.S."/>
            <person name="Hitz B.C."/>
            <person name="Karra K."/>
            <person name="Nash R.S."/>
            <person name="Weng S."/>
            <person name="Wong E.D."/>
            <person name="Lloyd P."/>
            <person name="Skrzypek M.S."/>
            <person name="Miyasato S.R."/>
            <person name="Simison M."/>
            <person name="Cherry J.M."/>
        </authorList>
    </citation>
    <scope>GENOME REANNOTATION</scope>
    <source>
        <strain>ATCC 204508 / S288c</strain>
    </source>
</reference>
<reference key="3">
    <citation type="journal article" date="2007" name="Genome Res.">
        <title>Approaching a complete repository of sequence-verified protein-encoding clones for Saccharomyces cerevisiae.</title>
        <authorList>
            <person name="Hu Y."/>
            <person name="Rolfs A."/>
            <person name="Bhullar B."/>
            <person name="Murthy T.V.S."/>
            <person name="Zhu C."/>
            <person name="Berger M.F."/>
            <person name="Camargo A.A."/>
            <person name="Kelley F."/>
            <person name="McCarron S."/>
            <person name="Jepson D."/>
            <person name="Richardson A."/>
            <person name="Raphael J."/>
            <person name="Moreira D."/>
            <person name="Taycher E."/>
            <person name="Zuo D."/>
            <person name="Mohr S."/>
            <person name="Kane M.F."/>
            <person name="Williamson J."/>
            <person name="Simpson A.J.G."/>
            <person name="Bulyk M.L."/>
            <person name="Harlow E."/>
            <person name="Marsischky G."/>
            <person name="Kolodner R.D."/>
            <person name="LaBaer J."/>
        </authorList>
    </citation>
    <scope>NUCLEOTIDE SEQUENCE [GENOMIC DNA]</scope>
    <source>
        <strain>ATCC 204508 / S288c</strain>
    </source>
</reference>
<reference key="4">
    <citation type="journal article" date="2005" name="J. Biol. Chem.">
        <title>The Saccharomyces cerevisiae COQ10 gene encodes a START domain protein required for function of coenzyme Q in respiration.</title>
        <authorList>
            <person name="Barros M.H."/>
            <person name="Johnson A."/>
            <person name="Gin P."/>
            <person name="Marbois B.N."/>
            <person name="Clarke C.F."/>
            <person name="Tzagoloff A."/>
        </authorList>
    </citation>
    <scope>FUNCTION</scope>
    <scope>SUBCELLULAR LOCATION</scope>
    <scope>INTERACTION WITH COENZYME Q</scope>
</reference>
<reference key="5">
    <citation type="journal article" date="2006" name="J. Proteome Res.">
        <title>Toward the complete yeast mitochondrial proteome: multidimensional separation techniques for mitochondrial proteomics.</title>
        <authorList>
            <person name="Reinders J."/>
            <person name="Zahedi R.P."/>
            <person name="Pfanner N."/>
            <person name="Meisinger C."/>
            <person name="Sickmann A."/>
        </authorList>
    </citation>
    <scope>SUBCELLULAR LOCATION [LARGE SCALE ANALYSIS]</scope>
    <scope>IDENTIFICATION BY MASS SPECTROMETRY</scope>
</reference>
<feature type="transit peptide" description="Mitochondrion" evidence="1">
    <location>
        <begin position="1"/>
        <end position="39"/>
    </location>
</feature>
<feature type="chain" id="PRO_0000227688" description="Coenzyme Q-binding protein COQ10, mitochondrial">
    <location>
        <begin position="40"/>
        <end position="207"/>
    </location>
</feature>
<gene>
    <name type="primary">COQ10</name>
    <name type="ordered locus">YOL008W</name>
</gene>
<sequence>MVLIIRPSQTLILFRKAMLKPIGRYPLKRNFFGLSGTNHTIREQRYVLRKAINAPPSTVYAAVSEVAQYKEFIPYCVDSFVDKRNPVDNKPLIAGLRVGFKQYDEEFICNVTCKDTDHTYTVVAETISHNLFHLLISKWTIMPHPNRPNAAMVELLLRFKFKSRIYNSVSLIFAKTVTELVMNAFAKRAYHLVRLAMLKPSSKEGSP</sequence>
<name>COQ10_YEAST</name>